<comment type="function">
    <text evidence="1">Catalyzes the ferrous insertion into protoporphyrin IX.</text>
</comment>
<comment type="catalytic activity">
    <reaction evidence="1">
        <text>heme b + 2 H(+) = protoporphyrin IX + Fe(2+)</text>
        <dbReference type="Rhea" id="RHEA:22584"/>
        <dbReference type="ChEBI" id="CHEBI:15378"/>
        <dbReference type="ChEBI" id="CHEBI:29033"/>
        <dbReference type="ChEBI" id="CHEBI:57306"/>
        <dbReference type="ChEBI" id="CHEBI:60344"/>
        <dbReference type="EC" id="4.98.1.1"/>
    </reaction>
</comment>
<comment type="pathway">
    <text evidence="1">Porphyrin-containing compound metabolism; protoheme biosynthesis; protoheme from protoporphyrin-IX: step 1/1.</text>
</comment>
<comment type="subcellular location">
    <subcellularLocation>
        <location evidence="1">Cytoplasm</location>
    </subcellularLocation>
</comment>
<comment type="similarity">
    <text evidence="1">Belongs to the ferrochelatase family.</text>
</comment>
<reference key="1">
    <citation type="submission" date="2007-10" db="EMBL/GenBank/DDBJ databases">
        <title>Genome sequence of Campylobacter concisus 13826 isolated from human feces.</title>
        <authorList>
            <person name="Fouts D.E."/>
            <person name="Mongodin E.F."/>
            <person name="Puiu D."/>
            <person name="Sebastian Y."/>
            <person name="Miller W.G."/>
            <person name="Mandrell R.E."/>
            <person name="On S."/>
            <person name="Nelson K.E."/>
        </authorList>
    </citation>
    <scope>NUCLEOTIDE SEQUENCE [LARGE SCALE GENOMIC DNA]</scope>
    <source>
        <strain>13826</strain>
    </source>
</reference>
<gene>
    <name evidence="1" type="primary">hemH</name>
    <name type="ordered locus">Ccon26_12120</name>
    <name type="ORF">CCC13826_0053</name>
</gene>
<name>HEMH_CAMC1</name>
<proteinExistence type="inferred from homology"/>
<protein>
    <recommendedName>
        <fullName evidence="1">Ferrochelatase</fullName>
        <ecNumber evidence="1">4.98.1.1</ecNumber>
    </recommendedName>
    <alternativeName>
        <fullName evidence="1">Heme synthase</fullName>
    </alternativeName>
    <alternativeName>
        <fullName evidence="1">Protoheme ferro-lyase</fullName>
    </alternativeName>
</protein>
<keyword id="KW-0963">Cytoplasm</keyword>
<keyword id="KW-0350">Heme biosynthesis</keyword>
<keyword id="KW-0408">Iron</keyword>
<keyword id="KW-0456">Lyase</keyword>
<keyword id="KW-0479">Metal-binding</keyword>
<keyword id="KW-0627">Porphyrin biosynthesis</keyword>
<evidence type="ECO:0000255" key="1">
    <source>
        <dbReference type="HAMAP-Rule" id="MF_00323"/>
    </source>
</evidence>
<sequence>MKKALLLLNMGGANSLDDVEIFLTNMFNDPYILGIKNKFLRKFVAFMITKGRLKTAKHNYEQIGGKSPLCELTAKLCEKISSLKSEFDAVDFAMNYTSPFVKDVLKKYEKFDEIVLLPLYPHHSQTTITSSLADFKKAKEELKLKAKISLCEPFYDDDTYNKIIISHIREAIKDTDISDVSLIFSAHSLPRKIIEKGDIYEKHINEHVQILSKMLKEQGLNFKDVSLAYQSRLGPVKWLEPSLNEALAKCENKKALIYPLSFCIDNSETIFELVIEYAKLAKELSFSFYKVVECPNFSDEFASFILEKSKNAREFSL</sequence>
<feature type="chain" id="PRO_1000119602" description="Ferrochelatase">
    <location>
        <begin position="1"/>
        <end position="317"/>
    </location>
</feature>
<feature type="binding site" evidence="1">
    <location>
        <position position="187"/>
    </location>
    <ligand>
        <name>Fe cation</name>
        <dbReference type="ChEBI" id="CHEBI:24875"/>
    </ligand>
</feature>
<feature type="binding site" evidence="1">
    <location>
        <position position="268"/>
    </location>
    <ligand>
        <name>Fe cation</name>
        <dbReference type="ChEBI" id="CHEBI:24875"/>
    </ligand>
</feature>
<dbReference type="EC" id="4.98.1.1" evidence="1"/>
<dbReference type="EMBL" id="CP000792">
    <property type="protein sequence ID" value="EAT97745.2"/>
    <property type="molecule type" value="Genomic_DNA"/>
</dbReference>
<dbReference type="RefSeq" id="WP_012139984.1">
    <property type="nucleotide sequence ID" value="NC_009802.2"/>
</dbReference>
<dbReference type="SMR" id="A7ZE60"/>
<dbReference type="STRING" id="360104.CCC13826_0053"/>
<dbReference type="KEGG" id="cco:CCC13826_0053"/>
<dbReference type="eggNOG" id="COG0276">
    <property type="taxonomic scope" value="Bacteria"/>
</dbReference>
<dbReference type="HOGENOM" id="CLU_018884_4_1_7"/>
<dbReference type="OrthoDB" id="9809741at2"/>
<dbReference type="UniPathway" id="UPA00252">
    <property type="reaction ID" value="UER00325"/>
</dbReference>
<dbReference type="Proteomes" id="UP000001121">
    <property type="component" value="Chromosome"/>
</dbReference>
<dbReference type="GO" id="GO:0005737">
    <property type="term" value="C:cytoplasm"/>
    <property type="evidence" value="ECO:0007669"/>
    <property type="project" value="UniProtKB-SubCell"/>
</dbReference>
<dbReference type="GO" id="GO:0004325">
    <property type="term" value="F:ferrochelatase activity"/>
    <property type="evidence" value="ECO:0007669"/>
    <property type="project" value="UniProtKB-UniRule"/>
</dbReference>
<dbReference type="GO" id="GO:0046872">
    <property type="term" value="F:metal ion binding"/>
    <property type="evidence" value="ECO:0007669"/>
    <property type="project" value="UniProtKB-KW"/>
</dbReference>
<dbReference type="GO" id="GO:0006783">
    <property type="term" value="P:heme biosynthetic process"/>
    <property type="evidence" value="ECO:0007669"/>
    <property type="project" value="UniProtKB-UniRule"/>
</dbReference>
<dbReference type="CDD" id="cd00419">
    <property type="entry name" value="Ferrochelatase_C"/>
    <property type="match status" value="1"/>
</dbReference>
<dbReference type="CDD" id="cd03411">
    <property type="entry name" value="Ferrochelatase_N"/>
    <property type="match status" value="1"/>
</dbReference>
<dbReference type="Gene3D" id="3.40.50.1400">
    <property type="match status" value="2"/>
</dbReference>
<dbReference type="HAMAP" id="MF_00323">
    <property type="entry name" value="Ferrochelatase"/>
    <property type="match status" value="1"/>
</dbReference>
<dbReference type="InterPro" id="IPR001015">
    <property type="entry name" value="Ferrochelatase"/>
</dbReference>
<dbReference type="InterPro" id="IPR019772">
    <property type="entry name" value="Ferrochelatase_AS"/>
</dbReference>
<dbReference type="InterPro" id="IPR033644">
    <property type="entry name" value="Ferrochelatase_C"/>
</dbReference>
<dbReference type="InterPro" id="IPR033659">
    <property type="entry name" value="Ferrochelatase_N"/>
</dbReference>
<dbReference type="NCBIfam" id="TIGR00109">
    <property type="entry name" value="hemH"/>
    <property type="match status" value="1"/>
</dbReference>
<dbReference type="PANTHER" id="PTHR11108">
    <property type="entry name" value="FERROCHELATASE"/>
    <property type="match status" value="1"/>
</dbReference>
<dbReference type="PANTHER" id="PTHR11108:SF1">
    <property type="entry name" value="FERROCHELATASE, MITOCHONDRIAL"/>
    <property type="match status" value="1"/>
</dbReference>
<dbReference type="Pfam" id="PF00762">
    <property type="entry name" value="Ferrochelatase"/>
    <property type="match status" value="1"/>
</dbReference>
<dbReference type="SUPFAM" id="SSF53800">
    <property type="entry name" value="Chelatase"/>
    <property type="match status" value="1"/>
</dbReference>
<dbReference type="PROSITE" id="PS00534">
    <property type="entry name" value="FERROCHELATASE"/>
    <property type="match status" value="1"/>
</dbReference>
<organism>
    <name type="scientific">Campylobacter concisus (strain 13826)</name>
    <dbReference type="NCBI Taxonomy" id="360104"/>
    <lineage>
        <taxon>Bacteria</taxon>
        <taxon>Pseudomonadati</taxon>
        <taxon>Campylobacterota</taxon>
        <taxon>Epsilonproteobacteria</taxon>
        <taxon>Campylobacterales</taxon>
        <taxon>Campylobacteraceae</taxon>
        <taxon>Campylobacter</taxon>
    </lineage>
</organism>
<accession>A7ZE60</accession>